<evidence type="ECO:0000250" key="1">
    <source>
        <dbReference type="UniProtKB" id="Q14766"/>
    </source>
</evidence>
<evidence type="ECO:0000255" key="2"/>
<evidence type="ECO:0000255" key="3">
    <source>
        <dbReference type="PROSITE-ProRule" id="PRU00076"/>
    </source>
</evidence>
<evidence type="ECO:0000255" key="4">
    <source>
        <dbReference type="PROSITE-ProRule" id="PRU00697"/>
    </source>
</evidence>
<evidence type="ECO:0000256" key="5">
    <source>
        <dbReference type="SAM" id="MobiDB-lite"/>
    </source>
</evidence>
<evidence type="ECO:0000303" key="6">
    <source>
    </source>
</evidence>
<evidence type="ECO:0000303" key="7">
    <source>
    </source>
</evidence>
<evidence type="ECO:0000303" key="8">
    <source>
    </source>
</evidence>
<evidence type="ECO:0000305" key="9"/>
<evidence type="ECO:0000312" key="10">
    <source>
        <dbReference type="EMBL" id="AAN38831.1"/>
    </source>
</evidence>
<evidence type="ECO:0000312" key="11">
    <source>
        <dbReference type="MGI" id="MGI:109151"/>
    </source>
</evidence>
<evidence type="ECO:0007744" key="12">
    <source>
    </source>
</evidence>
<name>LTBP1_MOUSE</name>
<proteinExistence type="evidence at protein level"/>
<comment type="function">
    <text evidence="1">Key regulator of transforming growth factor beta (TGFB1, TGFB2 and TGFB3) that controls TGF-beta activation by maintaining it in a latent state during storage in extracellular space. Associates specifically via disulfide bonds with the Latency-associated peptide (LAP), which is the regulatory chain of TGF-beta, and regulates integrin-dependent activation of TGF-beta. Outcompeted by LRRC32/GARP for binding to LAP regulatory chain of TGF-beta.</text>
</comment>
<comment type="subunit">
    <text evidence="1">Interacts with TGFB1; associates via disulfide bonds with the Latency-associated peptide chain (LAP) regulatory chain of TGFB1, leading to regulate activation of TGF-beta-1. LTBP1 does not bind directly to TGF-beta-1, the active chain of TGFB1. Interacts (via C-terminal domain) with FBN1 (via N-terminal domain). Interacts with FBN2. Interacts with ADAMTSL2. Interacts with EFEMP2 (By similarity).</text>
</comment>
<comment type="subcellular location">
    <subcellularLocation>
        <location evidence="1">Secreted</location>
    </subcellularLocation>
    <subcellularLocation>
        <location evidence="1">Secreted</location>
        <location evidence="1">Extracellular space</location>
        <location evidence="1">Extracellular matrix</location>
    </subcellularLocation>
</comment>
<comment type="alternative products">
    <event type="alternative splicing"/>
    <isoform>
        <id>Q8CG19-1</id>
        <name>Long</name>
        <name>LTBP-1L</name>
        <sequence type="displayed"/>
    </isoform>
    <isoform>
        <id>Q8CG19-2</id>
        <id>Q8CG18-1</id>
        <name>Short</name>
        <name>LTBP-1S</name>
        <sequence type="described" ref="VSP_036968 VSP_036969"/>
    </isoform>
    <isoform>
        <id>Q8CG19-3</id>
        <name>3</name>
        <sequence type="described" ref="VSP_036968 VSP_036969 VSP_036970"/>
    </isoform>
</comment>
<comment type="domain">
    <text evidence="1">The 8-Cys3 region in the third TB domain mediates the interchain disulfide bond interaction with the Latency-associated peptide chain (LAP) regulatory chain of TGFB1.</text>
</comment>
<comment type="PTM">
    <text evidence="1">Contains hydroxylated asparagine residues.</text>
</comment>
<comment type="PTM">
    <text evidence="1">Two intrachain disulfide bonds from the TB3 domain are rearranged upon TGFB1 binding, and form interchain bonds with TGFB1 propeptide, anchoring it to the extracellular matrix.</text>
</comment>
<comment type="PTM">
    <text evidence="1">O-glycosylated on serine residues by POGLUT2 and POGLUT3.</text>
</comment>
<comment type="similarity">
    <text evidence="9">Belongs to the LTBP family.</text>
</comment>
<sequence>MAGAWLRWGLLLWAGLLAWSAHGRVRRITYVVRPGPGLPAGALPLAGPPRTFNVALDARYSRSSTAASSRALAGPPAERTRRTSQPGGAALPGLRSPLPPEPARPGGPSRQLHSKAGAQTAVTRFAKHGRQVVRSQVQQDAQSAGGSRLQVQQKQQLQGINVCGGQCCHGWSKPPGSQRCTKPSCVPPCQNGGMCLRPQLCVCKPGSKGKACEITAAQDTMPPAFGGQNPGSSWAPLEQAAKHTSTKKADTLPRVSPVAQMTLTLKPKPSMGLSQQIHPQVAPLSSQNVMIRHGQTQEYLLKPKYFPAPKVVSAEQSTEGSFSLRYGQEQGTAPFQVSNHTGRIKVVFTPSICKVTCTKGNCQNSCQKGNTTTLISENGHAADTLTATNFRVVICHLPCMNGGQCSSRDKCQCPPNFTGKLCQIPVLGASMPKLYQHAQQQGKALGSHVIHSTHTLPLTMTSQQGVKVKFPPNIVNIHVKHPPEASVQIHQVSRIDSPGGQKVKEAQPGQSQVSYQGLPVQKTQTVHSTYSHQQLIPHVYPVAAKTQLGRCFQETIGSQCGKALPGLSKQEDCCGTVGTSWGFNKCQKCPKKQSYHGYTQMMECLQGYKRVNNTFCQDINECQLQGVCPNGECLNTMGSYRCSCKMGFGPDPTFSSCVPDPPVISEEKGPCYRLVSPGRHCMHPLSVHLTKQICCCSVGKAWGPHCEKCPLPGTAAFKEICPGGMGYTVSGVHRRRPIHQHIGKEAVYVKPKNTQPVAKSTHPPPLPAKEEPVEALTSSWEHGPRGAEPEVVTAPPEKEIPSLDQEKTRLEPGQPQLSPGVSTIHLHPQFPVVVEKTSPPVPVEVAPEASTSSASQVIAPTQVTEINECTVNPDICGAGHCINLPVRYTCICYEGYKFSEQLRKCVDIDECAQVRHLCSQGRCENTEGSFLCVCPAGFMASEEGTNCIDVDECLRPDMCRDGRCINTAGAFRCEYCDSGYRMSRRGYCEDIDECLKPSTCPEEQCVNTPGSYQCVPCTEGFRGWNGQCLDVDECLQPKVCTNGSCTNLEGSYMCSCHRGYSPTPDHRHCQDIDECQQGNLCMNGQCRNTDGSFRCTCGQGYQLSAAKDQCEDIDECEHHHLCSHGQCRNTEGSFQCVCNQGYRASVLGDHCEDINECLEDSSVCQGGDCINTAGSYDCTCPDGFQLNDNKGCQDINECAQPGLCGSHGECLNTQGSFHCVCEQGFSISADGRTCEDIDECVNNTVCDSHGFCDNTAGSFRCLCYQGFQAPQDGQGCVDVNECELLSGVCGEAFCENVEGSFLCVCADENQEYSPMTGQCRSRVTEDSGVDRQPREEKKECYYNLNDASLCDNVLAPNVTKQECCCTSGAGWGDNCEIFPCPVQGTAEFTEMCPRGKGLVPAGESSYDTGGENYKDADECLLFGEEICKNGYCLNTQPGYECYCKQGTYYDPVKLQCFDMDECQDPNSCIDGQCVNTEGSYNCFCTHPMVLDASEKRCVQPTESNEQIEETDVYQDLCWEHLSEEYVCSRPLVGKQTTYTECCCLYGEAWGMQCALCPMKDSDDYAQLCNIPVTGRRRPYGRDALVDFSEQYGPETDPYFIQDRFLNSFEELQAEECGILNGCENGRCVRVQEGYTCDCFDGYHLDMAKMTCVDVNECSELNNRMSLCKNAKCINTEGSYKCLCLPGYIPSDKPNYCTPLNSALNLDKESDLE</sequence>
<reference evidence="9" key="1">
    <citation type="journal article" date="2003" name="Gene">
        <title>Molecular cloning of the mouse Ltbp-1 gene reveals tissue specific expression of alternatively spliced forms.</title>
        <authorList>
            <person name="Noguera I."/>
            <person name="Obata H."/>
            <person name="Gualandris A."/>
            <person name="Cowin P."/>
            <person name="Rifkin D.B."/>
        </authorList>
    </citation>
    <scope>NUCLEOTIDE SEQUENCE [GENOMIC DNA]</scope>
    <scope>ALTERNATIVE SPLICING (ISOFORMS LONG AND SHORT)</scope>
</reference>
<reference evidence="9" key="2">
    <citation type="journal article" date="2003" name="Gene">
        <title>The murine latent transforming growth factor-beta binding protein (Ltbp-1) is alternatively spliced, and maps to a region syntenic to human chromosome 2p21-22.</title>
        <authorList>
            <person name="Weiskirchen R."/>
            <person name="Moser M."/>
            <person name="Guenther K."/>
            <person name="Weiskirchen S."/>
            <person name="Gressner A.M."/>
        </authorList>
    </citation>
    <scope>NUCLEOTIDE SEQUENCE [GENOMIC DNA]</scope>
    <scope>ALTERNATIVE SPLICING</scope>
    <source>
        <strain evidence="10">129/SvJ</strain>
    </source>
</reference>
<reference key="3">
    <citation type="submission" date="1997-09" db="EMBL/GenBank/DDBJ databases">
        <authorList>
            <person name="Noguera I."/>
            <person name="Cowin P."/>
            <person name="Rifkin D.B."/>
        </authorList>
    </citation>
    <scope>NUCLEOTIDE SEQUENCE [MRNA] (ISOFORM LONG)</scope>
    <source>
        <strain>BALB/cJ</strain>
        <tissue>Heart</tissue>
    </source>
</reference>
<reference key="4">
    <citation type="journal article" date="2009" name="PLoS Biol.">
        <title>Lineage-specific biology revealed by a finished genome assembly of the mouse.</title>
        <authorList>
            <person name="Church D.M."/>
            <person name="Goodstadt L."/>
            <person name="Hillier L.W."/>
            <person name="Zody M.C."/>
            <person name="Goldstein S."/>
            <person name="She X."/>
            <person name="Bult C.J."/>
            <person name="Agarwala R."/>
            <person name="Cherry J.L."/>
            <person name="DiCuccio M."/>
            <person name="Hlavina W."/>
            <person name="Kapustin Y."/>
            <person name="Meric P."/>
            <person name="Maglott D."/>
            <person name="Birtle Z."/>
            <person name="Marques A.C."/>
            <person name="Graves T."/>
            <person name="Zhou S."/>
            <person name="Teague B."/>
            <person name="Potamousis K."/>
            <person name="Churas C."/>
            <person name="Place M."/>
            <person name="Herschleb J."/>
            <person name="Runnheim R."/>
            <person name="Forrest D."/>
            <person name="Amos-Landgraf J."/>
            <person name="Schwartz D.C."/>
            <person name="Cheng Z."/>
            <person name="Lindblad-Toh K."/>
            <person name="Eichler E.E."/>
            <person name="Ponting C.P."/>
        </authorList>
    </citation>
    <scope>NUCLEOTIDE SEQUENCE [LARGE SCALE GENOMIC DNA]</scope>
    <source>
        <strain>C57BL/6J</strain>
    </source>
</reference>
<reference key="5">
    <citation type="journal article" date="2004" name="Genome Res.">
        <title>The status, quality, and expansion of the NIH full-length cDNA project: the Mammalian Gene Collection (MGC).</title>
        <authorList>
            <consortium name="The MGC Project Team"/>
        </authorList>
    </citation>
    <scope>NUCLEOTIDE SEQUENCE [LARGE SCALE MRNA] (ISOFORM SHORT)</scope>
    <source>
        <strain>C57BL/6J</strain>
        <tissue>Brain</tissue>
    </source>
</reference>
<reference key="6">
    <citation type="journal article" date="2005" name="Science">
        <title>The transcriptional landscape of the mammalian genome.</title>
        <authorList>
            <person name="Carninci P."/>
            <person name="Kasukawa T."/>
            <person name="Katayama S."/>
            <person name="Gough J."/>
            <person name="Frith M.C."/>
            <person name="Maeda N."/>
            <person name="Oyama R."/>
            <person name="Ravasi T."/>
            <person name="Lenhard B."/>
            <person name="Wells C."/>
            <person name="Kodzius R."/>
            <person name="Shimokawa K."/>
            <person name="Bajic V.B."/>
            <person name="Brenner S.E."/>
            <person name="Batalov S."/>
            <person name="Forrest A.R."/>
            <person name="Zavolan M."/>
            <person name="Davis M.J."/>
            <person name="Wilming L.G."/>
            <person name="Aidinis V."/>
            <person name="Allen J.E."/>
            <person name="Ambesi-Impiombato A."/>
            <person name="Apweiler R."/>
            <person name="Aturaliya R.N."/>
            <person name="Bailey T.L."/>
            <person name="Bansal M."/>
            <person name="Baxter L."/>
            <person name="Beisel K.W."/>
            <person name="Bersano T."/>
            <person name="Bono H."/>
            <person name="Chalk A.M."/>
            <person name="Chiu K.P."/>
            <person name="Choudhary V."/>
            <person name="Christoffels A."/>
            <person name="Clutterbuck D.R."/>
            <person name="Crowe M.L."/>
            <person name="Dalla E."/>
            <person name="Dalrymple B.P."/>
            <person name="de Bono B."/>
            <person name="Della Gatta G."/>
            <person name="di Bernardo D."/>
            <person name="Down T."/>
            <person name="Engstrom P."/>
            <person name="Fagiolini M."/>
            <person name="Faulkner G."/>
            <person name="Fletcher C.F."/>
            <person name="Fukushima T."/>
            <person name="Furuno M."/>
            <person name="Futaki S."/>
            <person name="Gariboldi M."/>
            <person name="Georgii-Hemming P."/>
            <person name="Gingeras T.R."/>
            <person name="Gojobori T."/>
            <person name="Green R.E."/>
            <person name="Gustincich S."/>
            <person name="Harbers M."/>
            <person name="Hayashi Y."/>
            <person name="Hensch T.K."/>
            <person name="Hirokawa N."/>
            <person name="Hill D."/>
            <person name="Huminiecki L."/>
            <person name="Iacono M."/>
            <person name="Ikeo K."/>
            <person name="Iwama A."/>
            <person name="Ishikawa T."/>
            <person name="Jakt M."/>
            <person name="Kanapin A."/>
            <person name="Katoh M."/>
            <person name="Kawasawa Y."/>
            <person name="Kelso J."/>
            <person name="Kitamura H."/>
            <person name="Kitano H."/>
            <person name="Kollias G."/>
            <person name="Krishnan S.P."/>
            <person name="Kruger A."/>
            <person name="Kummerfeld S.K."/>
            <person name="Kurochkin I.V."/>
            <person name="Lareau L.F."/>
            <person name="Lazarevic D."/>
            <person name="Lipovich L."/>
            <person name="Liu J."/>
            <person name="Liuni S."/>
            <person name="McWilliam S."/>
            <person name="Madan Babu M."/>
            <person name="Madera M."/>
            <person name="Marchionni L."/>
            <person name="Matsuda H."/>
            <person name="Matsuzawa S."/>
            <person name="Miki H."/>
            <person name="Mignone F."/>
            <person name="Miyake S."/>
            <person name="Morris K."/>
            <person name="Mottagui-Tabar S."/>
            <person name="Mulder N."/>
            <person name="Nakano N."/>
            <person name="Nakauchi H."/>
            <person name="Ng P."/>
            <person name="Nilsson R."/>
            <person name="Nishiguchi S."/>
            <person name="Nishikawa S."/>
            <person name="Nori F."/>
            <person name="Ohara O."/>
            <person name="Okazaki Y."/>
            <person name="Orlando V."/>
            <person name="Pang K.C."/>
            <person name="Pavan W.J."/>
            <person name="Pavesi G."/>
            <person name="Pesole G."/>
            <person name="Petrovsky N."/>
            <person name="Piazza S."/>
            <person name="Reed J."/>
            <person name="Reid J.F."/>
            <person name="Ring B.Z."/>
            <person name="Ringwald M."/>
            <person name="Rost B."/>
            <person name="Ruan Y."/>
            <person name="Salzberg S.L."/>
            <person name="Sandelin A."/>
            <person name="Schneider C."/>
            <person name="Schoenbach C."/>
            <person name="Sekiguchi K."/>
            <person name="Semple C.A."/>
            <person name="Seno S."/>
            <person name="Sessa L."/>
            <person name="Sheng Y."/>
            <person name="Shibata Y."/>
            <person name="Shimada H."/>
            <person name="Shimada K."/>
            <person name="Silva D."/>
            <person name="Sinclair B."/>
            <person name="Sperling S."/>
            <person name="Stupka E."/>
            <person name="Sugiura K."/>
            <person name="Sultana R."/>
            <person name="Takenaka Y."/>
            <person name="Taki K."/>
            <person name="Tammoja K."/>
            <person name="Tan S.L."/>
            <person name="Tang S."/>
            <person name="Taylor M.S."/>
            <person name="Tegner J."/>
            <person name="Teichmann S.A."/>
            <person name="Ueda H.R."/>
            <person name="van Nimwegen E."/>
            <person name="Verardo R."/>
            <person name="Wei C.L."/>
            <person name="Yagi K."/>
            <person name="Yamanishi H."/>
            <person name="Zabarovsky E."/>
            <person name="Zhu S."/>
            <person name="Zimmer A."/>
            <person name="Hide W."/>
            <person name="Bult C."/>
            <person name="Grimmond S.M."/>
            <person name="Teasdale R.D."/>
            <person name="Liu E.T."/>
            <person name="Brusic V."/>
            <person name="Quackenbush J."/>
            <person name="Wahlestedt C."/>
            <person name="Mattick J.S."/>
            <person name="Hume D.A."/>
            <person name="Kai C."/>
            <person name="Sasaki D."/>
            <person name="Tomaru Y."/>
            <person name="Fukuda S."/>
            <person name="Kanamori-Katayama M."/>
            <person name="Suzuki M."/>
            <person name="Aoki J."/>
            <person name="Arakawa T."/>
            <person name="Iida J."/>
            <person name="Imamura K."/>
            <person name="Itoh M."/>
            <person name="Kato T."/>
            <person name="Kawaji H."/>
            <person name="Kawagashira N."/>
            <person name="Kawashima T."/>
            <person name="Kojima M."/>
            <person name="Kondo S."/>
            <person name="Konno H."/>
            <person name="Nakano K."/>
            <person name="Ninomiya N."/>
            <person name="Nishio T."/>
            <person name="Okada M."/>
            <person name="Plessy C."/>
            <person name="Shibata K."/>
            <person name="Shiraki T."/>
            <person name="Suzuki S."/>
            <person name="Tagami M."/>
            <person name="Waki K."/>
            <person name="Watahiki A."/>
            <person name="Okamura-Oho Y."/>
            <person name="Suzuki H."/>
            <person name="Kawai J."/>
            <person name="Hayashizaki Y."/>
        </authorList>
    </citation>
    <scope>NUCLEOTIDE SEQUENCE [LARGE SCALE MRNA] OF 1111-1712</scope>
    <source>
        <strain>C57BL/6J</strain>
        <tissue>Aorta</tissue>
        <tissue>Liver</tissue>
        <tissue>Vein</tissue>
    </source>
</reference>
<reference key="7">
    <citation type="journal article" date="1999" name="Cytokine Growth Factor Rev.">
        <title>Latent transforming growth factor-beta binding proteins (LTBPs) -- structural extracellular matrix proteins for targeting TGF-beta action.</title>
        <authorList>
            <person name="Saharinen J."/>
            <person name="Hyytiainen M."/>
            <person name="Taipale J."/>
            <person name="Keski-Oja J."/>
        </authorList>
    </citation>
    <scope>REVIEW</scope>
</reference>
<reference key="8">
    <citation type="journal article" date="2000" name="Biochem. J.">
        <title>The latent transforming growth factor beta binding protein (LTBP) family.</title>
        <authorList>
            <person name="Oklu R."/>
            <person name="Hesketh R."/>
        </authorList>
    </citation>
    <scope>REVIEW</scope>
</reference>
<reference key="9">
    <citation type="journal article" date="2010" name="Cell">
        <title>A tissue-specific atlas of mouse protein phosphorylation and expression.</title>
        <authorList>
            <person name="Huttlin E.L."/>
            <person name="Jedrychowski M.P."/>
            <person name="Elias J.E."/>
            <person name="Goswami T."/>
            <person name="Rad R."/>
            <person name="Beausoleil S.A."/>
            <person name="Villen J."/>
            <person name="Haas W."/>
            <person name="Sowa M.E."/>
            <person name="Gygi S.P."/>
        </authorList>
    </citation>
    <scope>PHOSPHORYLATION [LARGE SCALE ANALYSIS] AT SER-1607</scope>
    <scope>IDENTIFICATION BY MASS SPECTROMETRY [LARGE SCALE ANALYSIS]</scope>
    <source>
        <tissue>Lung</tissue>
    </source>
</reference>
<accession>Q8CG19</accession>
<accession>B1B1D9</accession>
<accession>B1B1E1</accession>
<accession>O88349</accession>
<accession>Q505C9</accession>
<accession>Q8BNW7</accession>
<accession>Q8C7F5</accession>
<accession>Q8CG18</accession>
<accession>Q8CIR0</accession>
<keyword id="KW-0025">Alternative splicing</keyword>
<keyword id="KW-1015">Disulfide bond</keyword>
<keyword id="KW-0245">EGF-like domain</keyword>
<keyword id="KW-0272">Extracellular matrix</keyword>
<keyword id="KW-0325">Glycoprotein</keyword>
<keyword id="KW-0340">Growth factor binding</keyword>
<keyword id="KW-0379">Hydroxylation</keyword>
<keyword id="KW-0597">Phosphoprotein</keyword>
<keyword id="KW-1185">Reference proteome</keyword>
<keyword id="KW-0677">Repeat</keyword>
<keyword id="KW-0964">Secreted</keyword>
<keyword id="KW-0732">Signal</keyword>
<organism>
    <name type="scientific">Mus musculus</name>
    <name type="common">Mouse</name>
    <dbReference type="NCBI Taxonomy" id="10090"/>
    <lineage>
        <taxon>Eukaryota</taxon>
        <taxon>Metazoa</taxon>
        <taxon>Chordata</taxon>
        <taxon>Craniata</taxon>
        <taxon>Vertebrata</taxon>
        <taxon>Euteleostomi</taxon>
        <taxon>Mammalia</taxon>
        <taxon>Eutheria</taxon>
        <taxon>Euarchontoglires</taxon>
        <taxon>Glires</taxon>
        <taxon>Rodentia</taxon>
        <taxon>Myomorpha</taxon>
        <taxon>Muroidea</taxon>
        <taxon>Muridae</taxon>
        <taxon>Murinae</taxon>
        <taxon>Mus</taxon>
        <taxon>Mus</taxon>
    </lineage>
</organism>
<feature type="signal peptide" evidence="2">
    <location>
        <begin position="1"/>
        <end position="23"/>
    </location>
</feature>
<feature type="chain" id="PRO_0000007637" description="Latent-transforming growth factor beta-binding protein 1">
    <location>
        <begin position="24"/>
        <end position="1712"/>
    </location>
</feature>
<feature type="domain" description="EGF-like 1" evidence="3">
    <location>
        <begin position="181"/>
        <end position="213"/>
    </location>
</feature>
<feature type="domain" description="EGF-like 2" evidence="3">
    <location>
        <begin position="391"/>
        <end position="423"/>
    </location>
</feature>
<feature type="domain" description="TB 1" evidence="4">
    <location>
        <begin position="549"/>
        <end position="601"/>
    </location>
</feature>
<feature type="domain" description="EGF-like 3; calcium-binding" evidence="3">
    <location>
        <begin position="618"/>
        <end position="658"/>
    </location>
</feature>
<feature type="domain" description="TB 2" evidence="4">
    <location>
        <begin position="669"/>
        <end position="721"/>
    </location>
</feature>
<feature type="domain" description="EGF-like 4; calcium-binding" evidence="3">
    <location>
        <begin position="865"/>
        <end position="906"/>
    </location>
</feature>
<feature type="domain" description="EGF-like 5; calcium-binding" evidence="3">
    <location>
        <begin position="907"/>
        <end position="948"/>
    </location>
</feature>
<feature type="domain" description="EGF-like 6; calcium-binding" evidence="3">
    <location>
        <begin position="949"/>
        <end position="989"/>
    </location>
</feature>
<feature type="domain" description="EGF-like 7; calcium-binding" evidence="3">
    <location>
        <begin position="990"/>
        <end position="1029"/>
    </location>
</feature>
<feature type="domain" description="EGF-like 8; calcium-binding" evidence="3">
    <location>
        <begin position="1030"/>
        <end position="1070"/>
    </location>
</feature>
<feature type="domain" description="EGF-like 9; calcium-binding" evidence="3">
    <location>
        <begin position="1071"/>
        <end position="1111"/>
    </location>
</feature>
<feature type="domain" description="EGF-like 10; calcium-binding" evidence="3">
    <location>
        <begin position="1112"/>
        <end position="1152"/>
    </location>
</feature>
<feature type="domain" description="EGF-like 11; calcium-binding" evidence="3">
    <location>
        <begin position="1153"/>
        <end position="1193"/>
    </location>
</feature>
<feature type="domain" description="EGF-like 12; calcium-binding" evidence="3">
    <location>
        <begin position="1194"/>
        <end position="1235"/>
    </location>
</feature>
<feature type="domain" description="EGF-like 13; calcium-binding" evidence="3">
    <location>
        <begin position="1236"/>
        <end position="1277"/>
    </location>
</feature>
<feature type="domain" description="EGF-like 14; calcium-binding" evidence="3">
    <location>
        <begin position="1278"/>
        <end position="1320"/>
    </location>
</feature>
<feature type="domain" description="TB 3" evidence="4">
    <location>
        <begin position="1338"/>
        <end position="1392"/>
    </location>
</feature>
<feature type="domain" description="EGF-like 15; calcium-binding" evidence="3">
    <location>
        <begin position="1415"/>
        <end position="1457"/>
    </location>
</feature>
<feature type="domain" description="EGF-like 16; calcium-binding" evidence="3">
    <location>
        <begin position="1458"/>
        <end position="1498"/>
    </location>
</feature>
<feature type="domain" description="TB 4" evidence="4">
    <location>
        <begin position="1515"/>
        <end position="1568"/>
    </location>
</feature>
<feature type="domain" description="EGF-like 17" evidence="3">
    <location>
        <begin position="1612"/>
        <end position="1652"/>
    </location>
</feature>
<feature type="domain" description="EGF-like 18; calcium-binding" evidence="3">
    <location>
        <begin position="1653"/>
        <end position="1697"/>
    </location>
</feature>
<feature type="region of interest" description="Disordered" evidence="5">
    <location>
        <begin position="65"/>
        <end position="118"/>
    </location>
</feature>
<feature type="region of interest" description="Disordered" evidence="5">
    <location>
        <begin position="753"/>
        <end position="799"/>
    </location>
</feature>
<feature type="region of interest" description="8-Cys3 region" evidence="1">
    <location>
        <begin position="1335"/>
        <end position="1402"/>
    </location>
</feature>
<feature type="region of interest" description="C-terminal domain" evidence="1">
    <location>
        <begin position="1498"/>
        <end position="1712"/>
    </location>
</feature>
<feature type="modified residue" description="(3R)-3-hydroxyasparagine" evidence="1">
    <location>
        <position position="966"/>
    </location>
</feature>
<feature type="modified residue" description="(3R)-3-hydroxyasparagine" evidence="1">
    <location>
        <position position="1129"/>
    </location>
</feature>
<feature type="modified residue" description="Phosphoserine" evidence="1">
    <location>
        <position position="1405"/>
    </location>
</feature>
<feature type="modified residue" description="Phosphoserine" evidence="1">
    <location>
        <position position="1588"/>
    </location>
</feature>
<feature type="modified residue" description="Phosphoserine" evidence="12">
    <location>
        <position position="1607"/>
    </location>
</feature>
<feature type="glycosylation site" description="N-linked (GlcNAc...) asparagine" evidence="2">
    <location>
        <position position="339"/>
    </location>
</feature>
<feature type="glycosylation site" description="N-linked (GlcNAc...) asparagine" evidence="2">
    <location>
        <position position="370"/>
    </location>
</feature>
<feature type="glycosylation site" description="N-linked (GlcNAc...) asparagine" evidence="2">
    <location>
        <position position="416"/>
    </location>
</feature>
<feature type="glycosylation site" description="N-linked (GlcNAc...) asparagine" evidence="2">
    <location>
        <position position="612"/>
    </location>
</feature>
<feature type="glycosylation site" description="O-linked (Glc) serine" evidence="1">
    <location>
        <position position="639"/>
    </location>
</feature>
<feature type="glycosylation site" description="O-linked (GalNAc...) threonine" evidence="1">
    <location>
        <position position="761"/>
    </location>
</feature>
<feature type="glycosylation site" description="O-linked (GalNAc...) threonine" evidence="1">
    <location>
        <position position="793"/>
    </location>
</feature>
<feature type="glycosylation site" description="O-linked (Glc) serine" evidence="1">
    <location>
        <position position="929"/>
    </location>
</feature>
<feature type="glycosylation site" description="O-linked (Glc) serine" evidence="1">
    <location>
        <position position="1011"/>
    </location>
</feature>
<feature type="glycosylation site" description="N-linked (GlcNAc...) asparagine" evidence="2">
    <location>
        <position position="1042"/>
    </location>
</feature>
<feature type="glycosylation site" description="O-linked (Glc) serine" evidence="1">
    <location>
        <position position="1051"/>
    </location>
</feature>
<feature type="glycosylation site" description="O-linked (Glc) serine" evidence="1">
    <location>
        <position position="1133"/>
    </location>
</feature>
<feature type="glycosylation site" description="O-linked (Glc) serine" evidence="1">
    <location>
        <position position="1216"/>
    </location>
</feature>
<feature type="glycosylation site" description="N-linked (GlcNAc...) asparagine" evidence="2">
    <location>
        <position position="1242"/>
    </location>
</feature>
<feature type="glycosylation site" description="N-linked (GlcNAc...) asparagine" evidence="2">
    <location>
        <position position="1357"/>
    </location>
</feature>
<feature type="glycosylation site" description="O-linked (Glc) serine" evidence="1">
    <location>
        <position position="1479"/>
    </location>
</feature>
<feature type="glycosylation site" description="O-linked (Glc) serine" evidence="1">
    <location>
        <position position="1678"/>
    </location>
</feature>
<feature type="disulfide bond" evidence="3">
    <location>
        <begin position="185"/>
        <end position="195"/>
    </location>
</feature>
<feature type="disulfide bond" evidence="3">
    <location>
        <begin position="189"/>
        <end position="201"/>
    </location>
</feature>
<feature type="disulfide bond" evidence="3">
    <location>
        <begin position="203"/>
        <end position="212"/>
    </location>
</feature>
<feature type="disulfide bond" evidence="3">
    <location>
        <begin position="395"/>
        <end position="405"/>
    </location>
</feature>
<feature type="disulfide bond" evidence="3">
    <location>
        <begin position="399"/>
        <end position="411"/>
    </location>
</feature>
<feature type="disulfide bond" evidence="3">
    <location>
        <begin position="413"/>
        <end position="422"/>
    </location>
</feature>
<feature type="disulfide bond" evidence="4">
    <location>
        <begin position="551"/>
        <end position="573"/>
    </location>
</feature>
<feature type="disulfide bond" evidence="4">
    <location>
        <begin position="560"/>
        <end position="586"/>
    </location>
</feature>
<feature type="disulfide bond" evidence="4">
    <location>
        <begin position="574"/>
        <end position="589"/>
    </location>
</feature>
<feature type="disulfide bond" evidence="3">
    <location>
        <begin position="622"/>
        <end position="633"/>
    </location>
</feature>
<feature type="disulfide bond" evidence="3">
    <location>
        <begin position="628"/>
        <end position="642"/>
    </location>
</feature>
<feature type="disulfide bond" evidence="3">
    <location>
        <begin position="644"/>
        <end position="657"/>
    </location>
</feature>
<feature type="disulfide bond" evidence="4">
    <location>
        <begin position="671"/>
        <end position="694"/>
    </location>
</feature>
<feature type="disulfide bond" evidence="4">
    <location>
        <begin position="681"/>
        <end position="706"/>
    </location>
</feature>
<feature type="disulfide bond" evidence="4">
    <location>
        <begin position="695"/>
        <end position="709"/>
    </location>
</feature>
<feature type="disulfide bond" evidence="4">
    <location>
        <begin position="696"/>
        <end position="721"/>
    </location>
</feature>
<feature type="disulfide bond" evidence="3">
    <location>
        <begin position="869"/>
        <end position="881"/>
    </location>
</feature>
<feature type="disulfide bond" evidence="3">
    <location>
        <begin position="876"/>
        <end position="890"/>
    </location>
</feature>
<feature type="disulfide bond" evidence="3">
    <location>
        <begin position="892"/>
        <end position="905"/>
    </location>
</feature>
<feature type="disulfide bond" evidence="3">
    <location>
        <begin position="911"/>
        <end position="923"/>
    </location>
</feature>
<feature type="disulfide bond" evidence="3">
    <location>
        <begin position="918"/>
        <end position="932"/>
    </location>
</feature>
<feature type="disulfide bond" evidence="3">
    <location>
        <begin position="934"/>
        <end position="947"/>
    </location>
</feature>
<feature type="disulfide bond" evidence="3">
    <location>
        <begin position="953"/>
        <end position="964"/>
    </location>
</feature>
<feature type="disulfide bond" evidence="3">
    <location>
        <begin position="959"/>
        <end position="973"/>
    </location>
</feature>
<feature type="disulfide bond" evidence="3">
    <location>
        <begin position="976"/>
        <end position="988"/>
    </location>
</feature>
<feature type="disulfide bond" evidence="3">
    <location>
        <begin position="994"/>
        <end position="1005"/>
    </location>
</feature>
<feature type="disulfide bond" evidence="3">
    <location>
        <begin position="1000"/>
        <end position="1014"/>
    </location>
</feature>
<feature type="disulfide bond" evidence="3">
    <location>
        <begin position="1017"/>
        <end position="1028"/>
    </location>
</feature>
<feature type="disulfide bond" evidence="3">
    <location>
        <begin position="1034"/>
        <end position="1045"/>
    </location>
</feature>
<feature type="disulfide bond" evidence="3">
    <location>
        <begin position="1040"/>
        <end position="1054"/>
    </location>
</feature>
<feature type="disulfide bond" evidence="3">
    <location>
        <begin position="1056"/>
        <end position="1069"/>
    </location>
</feature>
<feature type="disulfide bond" evidence="3">
    <location>
        <begin position="1075"/>
        <end position="1086"/>
    </location>
</feature>
<feature type="disulfide bond" evidence="3">
    <location>
        <begin position="1081"/>
        <end position="1095"/>
    </location>
</feature>
<feature type="disulfide bond" evidence="3">
    <location>
        <begin position="1097"/>
        <end position="1110"/>
    </location>
</feature>
<feature type="disulfide bond" evidence="3">
    <location>
        <begin position="1116"/>
        <end position="1127"/>
    </location>
</feature>
<feature type="disulfide bond" evidence="3">
    <location>
        <begin position="1122"/>
        <end position="1136"/>
    </location>
</feature>
<feature type="disulfide bond" evidence="3">
    <location>
        <begin position="1138"/>
        <end position="1151"/>
    </location>
</feature>
<feature type="disulfide bond" evidence="3">
    <location>
        <begin position="1157"/>
        <end position="1169"/>
    </location>
</feature>
<feature type="disulfide bond" evidence="3">
    <location>
        <begin position="1164"/>
        <end position="1178"/>
    </location>
</feature>
<feature type="disulfide bond" evidence="3">
    <location>
        <begin position="1180"/>
        <end position="1192"/>
    </location>
</feature>
<feature type="disulfide bond" evidence="3">
    <location>
        <begin position="1198"/>
        <end position="1210"/>
    </location>
</feature>
<feature type="disulfide bond" evidence="3">
    <location>
        <begin position="1204"/>
        <end position="1219"/>
    </location>
</feature>
<feature type="disulfide bond" evidence="3">
    <location>
        <begin position="1221"/>
        <end position="1234"/>
    </location>
</feature>
<feature type="disulfide bond" evidence="3">
    <location>
        <begin position="1240"/>
        <end position="1252"/>
    </location>
</feature>
<feature type="disulfide bond" evidence="3">
    <location>
        <begin position="1246"/>
        <end position="1261"/>
    </location>
</feature>
<feature type="disulfide bond" evidence="3">
    <location>
        <begin position="1263"/>
        <end position="1276"/>
    </location>
</feature>
<feature type="disulfide bond" evidence="3">
    <location>
        <begin position="1282"/>
        <end position="1294"/>
    </location>
</feature>
<feature type="disulfide bond" evidence="3">
    <location>
        <begin position="1289"/>
        <end position="1303"/>
    </location>
</feature>
<feature type="disulfide bond" evidence="3">
    <location>
        <begin position="1305"/>
        <end position="1319"/>
    </location>
</feature>
<feature type="disulfide bond" evidence="4">
    <location>
        <begin position="1340"/>
        <end position="1363"/>
    </location>
</feature>
<feature type="disulfide bond" evidence="4">
    <location>
        <begin position="1350"/>
        <end position="1375"/>
    </location>
</feature>
<feature type="disulfide bond" description="Interchain (with C-33 in TGFB1); in linked form" evidence="1">
    <location>
        <position position="1350"/>
    </location>
</feature>
<feature type="disulfide bond" evidence="4">
    <location>
        <begin position="1364"/>
        <end position="1380"/>
    </location>
</feature>
<feature type="disulfide bond" evidence="4">
    <location>
        <begin position="1365"/>
        <end position="1392"/>
    </location>
</feature>
<feature type="disulfide bond" description="Interchain (with C-33 in TGFB1); in linked form" evidence="1">
    <location>
        <position position="1375"/>
    </location>
</feature>
<feature type="disulfide bond" evidence="3">
    <location>
        <begin position="1419"/>
        <end position="1432"/>
    </location>
</feature>
<feature type="disulfide bond" evidence="3">
    <location>
        <begin position="1427"/>
        <end position="1441"/>
    </location>
</feature>
<feature type="disulfide bond" evidence="3">
    <location>
        <begin position="1443"/>
        <end position="1456"/>
    </location>
</feature>
<feature type="disulfide bond" evidence="3">
    <location>
        <begin position="1462"/>
        <end position="1473"/>
    </location>
</feature>
<feature type="disulfide bond" evidence="3">
    <location>
        <begin position="1468"/>
        <end position="1482"/>
    </location>
</feature>
<feature type="disulfide bond" evidence="3">
    <location>
        <begin position="1484"/>
        <end position="1497"/>
    </location>
</feature>
<feature type="disulfide bond" evidence="4">
    <location>
        <begin position="1517"/>
        <end position="1541"/>
    </location>
</feature>
<feature type="disulfide bond" evidence="4">
    <location>
        <begin position="1527"/>
        <end position="1553"/>
    </location>
</feature>
<feature type="disulfide bond" evidence="4">
    <location>
        <begin position="1542"/>
        <end position="1556"/>
    </location>
</feature>
<feature type="disulfide bond" evidence="4">
    <location>
        <begin position="1543"/>
        <end position="1568"/>
    </location>
</feature>
<feature type="disulfide bond" evidence="3">
    <location>
        <begin position="1616"/>
        <end position="1627"/>
    </location>
</feature>
<feature type="disulfide bond" evidence="3">
    <location>
        <begin position="1622"/>
        <end position="1636"/>
    </location>
</feature>
<feature type="disulfide bond" evidence="3">
    <location>
        <begin position="1638"/>
        <end position="1651"/>
    </location>
</feature>
<feature type="disulfide bond" evidence="3">
    <location>
        <begin position="1657"/>
        <end position="1672"/>
    </location>
</feature>
<feature type="disulfide bond" evidence="3">
    <location>
        <begin position="1667"/>
        <end position="1681"/>
    </location>
</feature>
<feature type="disulfide bond" evidence="3">
    <location>
        <begin position="1683"/>
        <end position="1696"/>
    </location>
</feature>
<feature type="splice variant" id="VSP_036968" description="In isoform Short and isoform 3." evidence="8">
    <location>
        <begin position="1"/>
        <end position="318"/>
    </location>
</feature>
<feature type="splice variant" id="VSP_036969" description="In isoform Short and isoform 3." evidence="8">
    <original>EGSFSLRYGQEQGTAPFQ</original>
    <variation>MDTKLMCLLFFLCLPLLL</variation>
    <location>
        <begin position="319"/>
        <end position="336"/>
    </location>
</feature>
<feature type="splice variant" id="VSP_036970" description="In isoform 3." evidence="9">
    <location>
        <begin position="716"/>
        <end position="768"/>
    </location>
</feature>
<feature type="sequence conflict" description="In Ref. 1; AAN77250." evidence="9" ref="1">
    <original>S</original>
    <variation>F</variation>
    <location>
        <position position="313"/>
    </location>
</feature>
<feature type="sequence conflict" description="In Ref. 1; AAN77250/AAN77251 and 3; AAC33307." evidence="9" ref="1 3">
    <original>A</original>
    <variation>T</variation>
    <location>
        <position position="506"/>
    </location>
</feature>
<feature type="sequence conflict" description="In Ref. 1; AAN77250 and 3; AAC33307." evidence="9" ref="1 3">
    <original>Q</original>
    <variation>QQ</variation>
    <location>
        <position position="559"/>
    </location>
</feature>
<feature type="sequence conflict" description="In Ref. 3; AAC33307." evidence="9" ref="3">
    <original>E</original>
    <variation>K</variation>
    <location>
        <position position="1033"/>
    </location>
</feature>
<feature type="sequence conflict" description="In Ref. 6; BAC34222." evidence="9" ref="6">
    <original>E</original>
    <variation>G</variation>
    <location>
        <position position="1111"/>
    </location>
</feature>
<feature type="sequence conflict" description="In Ref. 6; BAC34222." evidence="9" ref="6">
    <original>S</original>
    <variation>F</variation>
    <location>
        <position position="1216"/>
    </location>
</feature>
<feature type="sequence conflict" description="In Ref. 1; AAN77250/AAN77251." evidence="9" ref="1">
    <original>Q</original>
    <variation>H</variation>
    <location>
        <position position="1631"/>
    </location>
</feature>
<feature type="sequence conflict" description="In Ref. 6; BAC34222." evidence="9" ref="6">
    <original>E</original>
    <variation>G</variation>
    <location>
        <position position="1659"/>
    </location>
</feature>
<feature type="sequence conflict" description="In Ref. 3; AAC33307." evidence="9" ref="3">
    <original>E</original>
    <variation>N</variation>
    <location>
        <position position="1712"/>
    </location>
</feature>
<protein>
    <recommendedName>
        <fullName evidence="6 7">Latent-transforming growth factor beta-binding protein 1</fullName>
        <shortName evidence="6 7">LTBP-1</shortName>
    </recommendedName>
    <alternativeName>
        <fullName evidence="1">Transforming growth factor beta-1-binding protein 1</fullName>
        <shortName evidence="1">TGF-beta1-BP-1</shortName>
    </alternativeName>
</protein>
<dbReference type="EMBL" id="AF346465">
    <property type="protein sequence ID" value="AAN77250.1"/>
    <property type="molecule type" value="Genomic_DNA"/>
</dbReference>
<dbReference type="EMBL" id="AF346434">
    <property type="protein sequence ID" value="AAN77250.1"/>
    <property type="status" value="JOINED"/>
    <property type="molecule type" value="Genomic_DNA"/>
</dbReference>
<dbReference type="EMBL" id="AF346435">
    <property type="protein sequence ID" value="AAN77250.1"/>
    <property type="status" value="JOINED"/>
    <property type="molecule type" value="Genomic_DNA"/>
</dbReference>
<dbReference type="EMBL" id="AF346436">
    <property type="protein sequence ID" value="AAN77250.1"/>
    <property type="status" value="JOINED"/>
    <property type="molecule type" value="Genomic_DNA"/>
</dbReference>
<dbReference type="EMBL" id="AF346437">
    <property type="protein sequence ID" value="AAN77250.1"/>
    <property type="status" value="JOINED"/>
    <property type="molecule type" value="Genomic_DNA"/>
</dbReference>
<dbReference type="EMBL" id="AF346438">
    <property type="protein sequence ID" value="AAN77250.1"/>
    <property type="status" value="JOINED"/>
    <property type="molecule type" value="Genomic_DNA"/>
</dbReference>
<dbReference type="EMBL" id="AF346439">
    <property type="protein sequence ID" value="AAN77250.1"/>
    <property type="status" value="JOINED"/>
    <property type="molecule type" value="Genomic_DNA"/>
</dbReference>
<dbReference type="EMBL" id="AF346440">
    <property type="protein sequence ID" value="AAN77250.1"/>
    <property type="status" value="JOINED"/>
    <property type="molecule type" value="Genomic_DNA"/>
</dbReference>
<dbReference type="EMBL" id="AF346441">
    <property type="protein sequence ID" value="AAN77250.1"/>
    <property type="status" value="JOINED"/>
    <property type="molecule type" value="Genomic_DNA"/>
</dbReference>
<dbReference type="EMBL" id="AF346442">
    <property type="protein sequence ID" value="AAN77250.1"/>
    <property type="status" value="JOINED"/>
    <property type="molecule type" value="Genomic_DNA"/>
</dbReference>
<dbReference type="EMBL" id="AF346443">
    <property type="protein sequence ID" value="AAN77250.1"/>
    <property type="status" value="JOINED"/>
    <property type="molecule type" value="Genomic_DNA"/>
</dbReference>
<dbReference type="EMBL" id="AF346444">
    <property type="protein sequence ID" value="AAN77250.1"/>
    <property type="status" value="JOINED"/>
    <property type="molecule type" value="Genomic_DNA"/>
</dbReference>
<dbReference type="EMBL" id="AF346445">
    <property type="protein sequence ID" value="AAN77250.1"/>
    <property type="status" value="JOINED"/>
    <property type="molecule type" value="Genomic_DNA"/>
</dbReference>
<dbReference type="EMBL" id="AF346446">
    <property type="protein sequence ID" value="AAN77250.1"/>
    <property type="status" value="JOINED"/>
    <property type="molecule type" value="Genomic_DNA"/>
</dbReference>
<dbReference type="EMBL" id="AF346447">
    <property type="protein sequence ID" value="AAN77250.1"/>
    <property type="status" value="JOINED"/>
    <property type="molecule type" value="Genomic_DNA"/>
</dbReference>
<dbReference type="EMBL" id="AF346448">
    <property type="protein sequence ID" value="AAN77250.1"/>
    <property type="status" value="JOINED"/>
    <property type="molecule type" value="Genomic_DNA"/>
</dbReference>
<dbReference type="EMBL" id="AF346449">
    <property type="protein sequence ID" value="AAN77250.1"/>
    <property type="status" value="JOINED"/>
    <property type="molecule type" value="Genomic_DNA"/>
</dbReference>
<dbReference type="EMBL" id="AF346450">
    <property type="protein sequence ID" value="AAN77250.1"/>
    <property type="status" value="JOINED"/>
    <property type="molecule type" value="Genomic_DNA"/>
</dbReference>
<dbReference type="EMBL" id="AF346451">
    <property type="protein sequence ID" value="AAN77250.1"/>
    <property type="status" value="JOINED"/>
    <property type="molecule type" value="Genomic_DNA"/>
</dbReference>
<dbReference type="EMBL" id="AF346452">
    <property type="protein sequence ID" value="AAN77250.1"/>
    <property type="status" value="JOINED"/>
    <property type="molecule type" value="Genomic_DNA"/>
</dbReference>
<dbReference type="EMBL" id="AF346453">
    <property type="protein sequence ID" value="AAN77250.1"/>
    <property type="status" value="JOINED"/>
    <property type="molecule type" value="Genomic_DNA"/>
</dbReference>
<dbReference type="EMBL" id="AF346454">
    <property type="protein sequence ID" value="AAN77250.1"/>
    <property type="status" value="JOINED"/>
    <property type="molecule type" value="Genomic_DNA"/>
</dbReference>
<dbReference type="EMBL" id="AF346455">
    <property type="protein sequence ID" value="AAN77250.1"/>
    <property type="status" value="JOINED"/>
    <property type="molecule type" value="Genomic_DNA"/>
</dbReference>
<dbReference type="EMBL" id="AF346456">
    <property type="protein sequence ID" value="AAN77250.1"/>
    <property type="status" value="JOINED"/>
    <property type="molecule type" value="Genomic_DNA"/>
</dbReference>
<dbReference type="EMBL" id="AF346457">
    <property type="protein sequence ID" value="AAN77250.1"/>
    <property type="status" value="JOINED"/>
    <property type="molecule type" value="Genomic_DNA"/>
</dbReference>
<dbReference type="EMBL" id="AF346458">
    <property type="protein sequence ID" value="AAN77250.1"/>
    <property type="status" value="JOINED"/>
    <property type="molecule type" value="Genomic_DNA"/>
</dbReference>
<dbReference type="EMBL" id="AF346459">
    <property type="protein sequence ID" value="AAN77250.1"/>
    <property type="status" value="JOINED"/>
    <property type="molecule type" value="Genomic_DNA"/>
</dbReference>
<dbReference type="EMBL" id="AF346460">
    <property type="protein sequence ID" value="AAN77250.1"/>
    <property type="status" value="JOINED"/>
    <property type="molecule type" value="Genomic_DNA"/>
</dbReference>
<dbReference type="EMBL" id="AF346461">
    <property type="protein sequence ID" value="AAN77250.1"/>
    <property type="status" value="JOINED"/>
    <property type="molecule type" value="Genomic_DNA"/>
</dbReference>
<dbReference type="EMBL" id="AF346462">
    <property type="protein sequence ID" value="AAN77250.1"/>
    <property type="status" value="JOINED"/>
    <property type="molecule type" value="Genomic_DNA"/>
</dbReference>
<dbReference type="EMBL" id="AF346463">
    <property type="protein sequence ID" value="AAN77250.1"/>
    <property type="status" value="JOINED"/>
    <property type="molecule type" value="Genomic_DNA"/>
</dbReference>
<dbReference type="EMBL" id="AF346464">
    <property type="protein sequence ID" value="AAN77250.1"/>
    <property type="status" value="JOINED"/>
    <property type="molecule type" value="Genomic_DNA"/>
</dbReference>
<dbReference type="EMBL" id="AF346465">
    <property type="protein sequence ID" value="AAN77251.1"/>
    <property type="molecule type" value="Genomic_DNA"/>
</dbReference>
<dbReference type="EMBL" id="AF346438">
    <property type="protein sequence ID" value="AAN77251.1"/>
    <property type="status" value="JOINED"/>
    <property type="molecule type" value="Genomic_DNA"/>
</dbReference>
<dbReference type="EMBL" id="AF346439">
    <property type="protein sequence ID" value="AAN77251.1"/>
    <property type="status" value="JOINED"/>
    <property type="molecule type" value="Genomic_DNA"/>
</dbReference>
<dbReference type="EMBL" id="AF346440">
    <property type="protein sequence ID" value="AAN77251.1"/>
    <property type="status" value="JOINED"/>
    <property type="molecule type" value="Genomic_DNA"/>
</dbReference>
<dbReference type="EMBL" id="AF346441">
    <property type="protein sequence ID" value="AAN77251.1"/>
    <property type="status" value="JOINED"/>
    <property type="molecule type" value="Genomic_DNA"/>
</dbReference>
<dbReference type="EMBL" id="AF346442">
    <property type="protein sequence ID" value="AAN77251.1"/>
    <property type="status" value="JOINED"/>
    <property type="molecule type" value="Genomic_DNA"/>
</dbReference>
<dbReference type="EMBL" id="AF346443">
    <property type="protein sequence ID" value="AAN77251.1"/>
    <property type="status" value="JOINED"/>
    <property type="molecule type" value="Genomic_DNA"/>
</dbReference>
<dbReference type="EMBL" id="AF346444">
    <property type="protein sequence ID" value="AAN77251.1"/>
    <property type="status" value="JOINED"/>
    <property type="molecule type" value="Genomic_DNA"/>
</dbReference>
<dbReference type="EMBL" id="AF346445">
    <property type="protein sequence ID" value="AAN77251.1"/>
    <property type="status" value="JOINED"/>
    <property type="molecule type" value="Genomic_DNA"/>
</dbReference>
<dbReference type="EMBL" id="AF346446">
    <property type="protein sequence ID" value="AAN77251.1"/>
    <property type="status" value="JOINED"/>
    <property type="molecule type" value="Genomic_DNA"/>
</dbReference>
<dbReference type="EMBL" id="AF346447">
    <property type="protein sequence ID" value="AAN77251.1"/>
    <property type="status" value="JOINED"/>
    <property type="molecule type" value="Genomic_DNA"/>
</dbReference>
<dbReference type="EMBL" id="AF346448">
    <property type="protein sequence ID" value="AAN77251.1"/>
    <property type="status" value="JOINED"/>
    <property type="molecule type" value="Genomic_DNA"/>
</dbReference>
<dbReference type="EMBL" id="AF346449">
    <property type="protein sequence ID" value="AAN77251.1"/>
    <property type="status" value="JOINED"/>
    <property type="molecule type" value="Genomic_DNA"/>
</dbReference>
<dbReference type="EMBL" id="AF346450">
    <property type="protein sequence ID" value="AAN77251.1"/>
    <property type="status" value="JOINED"/>
    <property type="molecule type" value="Genomic_DNA"/>
</dbReference>
<dbReference type="EMBL" id="AF346451">
    <property type="protein sequence ID" value="AAN77251.1"/>
    <property type="status" value="JOINED"/>
    <property type="molecule type" value="Genomic_DNA"/>
</dbReference>
<dbReference type="EMBL" id="AF346452">
    <property type="protein sequence ID" value="AAN77251.1"/>
    <property type="status" value="JOINED"/>
    <property type="molecule type" value="Genomic_DNA"/>
</dbReference>
<dbReference type="EMBL" id="AF346453">
    <property type="protein sequence ID" value="AAN77251.1"/>
    <property type="status" value="JOINED"/>
    <property type="molecule type" value="Genomic_DNA"/>
</dbReference>
<dbReference type="EMBL" id="AF346454">
    <property type="protein sequence ID" value="AAN77251.1"/>
    <property type="status" value="JOINED"/>
    <property type="molecule type" value="Genomic_DNA"/>
</dbReference>
<dbReference type="EMBL" id="AF346455">
    <property type="protein sequence ID" value="AAN77251.1"/>
    <property type="status" value="JOINED"/>
    <property type="molecule type" value="Genomic_DNA"/>
</dbReference>
<dbReference type="EMBL" id="AF346456">
    <property type="protein sequence ID" value="AAN77251.1"/>
    <property type="status" value="JOINED"/>
    <property type="molecule type" value="Genomic_DNA"/>
</dbReference>
<dbReference type="EMBL" id="AF346457">
    <property type="protein sequence ID" value="AAN77251.1"/>
    <property type="status" value="JOINED"/>
    <property type="molecule type" value="Genomic_DNA"/>
</dbReference>
<dbReference type="EMBL" id="AF346458">
    <property type="protein sequence ID" value="AAN77251.1"/>
    <property type="status" value="JOINED"/>
    <property type="molecule type" value="Genomic_DNA"/>
</dbReference>
<dbReference type="EMBL" id="AF346459">
    <property type="protein sequence ID" value="AAN77251.1"/>
    <property type="status" value="JOINED"/>
    <property type="molecule type" value="Genomic_DNA"/>
</dbReference>
<dbReference type="EMBL" id="AF346460">
    <property type="protein sequence ID" value="AAN77251.1"/>
    <property type="status" value="JOINED"/>
    <property type="molecule type" value="Genomic_DNA"/>
</dbReference>
<dbReference type="EMBL" id="AF346461">
    <property type="protein sequence ID" value="AAN77251.1"/>
    <property type="status" value="JOINED"/>
    <property type="molecule type" value="Genomic_DNA"/>
</dbReference>
<dbReference type="EMBL" id="AF346462">
    <property type="protein sequence ID" value="AAN77251.1"/>
    <property type="status" value="JOINED"/>
    <property type="molecule type" value="Genomic_DNA"/>
</dbReference>
<dbReference type="EMBL" id="AF346463">
    <property type="protein sequence ID" value="AAN77251.1"/>
    <property type="status" value="JOINED"/>
    <property type="molecule type" value="Genomic_DNA"/>
</dbReference>
<dbReference type="EMBL" id="AF346464">
    <property type="protein sequence ID" value="AAN77251.1"/>
    <property type="status" value="JOINED"/>
    <property type="molecule type" value="Genomic_DNA"/>
</dbReference>
<dbReference type="EMBL" id="AY143161">
    <property type="protein sequence ID" value="AAN38831.1"/>
    <property type="molecule type" value="Genomic_DNA"/>
</dbReference>
<dbReference type="EMBL" id="AF022889">
    <property type="protein sequence ID" value="AAC33307.1"/>
    <property type="molecule type" value="mRNA"/>
</dbReference>
<dbReference type="EMBL" id="AC118018">
    <property type="status" value="NOT_ANNOTATED_CDS"/>
    <property type="molecule type" value="Genomic_DNA"/>
</dbReference>
<dbReference type="EMBL" id="AC126550">
    <property type="status" value="NOT_ANNOTATED_CDS"/>
    <property type="molecule type" value="Genomic_DNA"/>
</dbReference>
<dbReference type="EMBL" id="AC154178">
    <property type="status" value="NOT_ANNOTATED_CDS"/>
    <property type="molecule type" value="Genomic_DNA"/>
</dbReference>
<dbReference type="EMBL" id="AC154491">
    <property type="status" value="NOT_ANNOTATED_CDS"/>
    <property type="molecule type" value="Genomic_DNA"/>
</dbReference>
<dbReference type="EMBL" id="CT033758">
    <property type="status" value="NOT_ANNOTATED_CDS"/>
    <property type="molecule type" value="Genomic_DNA"/>
</dbReference>
<dbReference type="EMBL" id="BC094612">
    <property type="protein sequence ID" value="AAH94612.1"/>
    <property type="molecule type" value="mRNA"/>
</dbReference>
<dbReference type="EMBL" id="AK050380">
    <property type="protein sequence ID" value="BAC34222.1"/>
    <property type="molecule type" value="mRNA"/>
</dbReference>
<dbReference type="EMBL" id="AK080024">
    <property type="protein sequence ID" value="BAC37808.1"/>
    <property type="molecule type" value="mRNA"/>
</dbReference>
<dbReference type="CCDS" id="CCDS28973.1">
    <molecule id="Q8CG19-1"/>
</dbReference>
<dbReference type="CCDS" id="CCDS37694.1">
    <molecule id="Q8CG19-2"/>
</dbReference>
<dbReference type="CCDS" id="CCDS84336.1">
    <molecule id="Q8CG19-3"/>
</dbReference>
<dbReference type="RefSeq" id="NP_001318166.1">
    <molecule id="Q8CG19-3"/>
    <property type="nucleotide sequence ID" value="NM_001331237.1"/>
</dbReference>
<dbReference type="RefSeq" id="NP_064303.2">
    <molecule id="Q8CG19-1"/>
    <property type="nucleotide sequence ID" value="NM_019919.4"/>
</dbReference>
<dbReference type="RefSeq" id="NP_996841.1">
    <molecule id="Q8CG19-2"/>
    <property type="nucleotide sequence ID" value="NM_206958.3"/>
</dbReference>
<dbReference type="BioGRID" id="234589">
    <property type="interactions" value="13"/>
</dbReference>
<dbReference type="FunCoup" id="Q8CG19">
    <property type="interactions" value="450"/>
</dbReference>
<dbReference type="IntAct" id="Q8CG19">
    <property type="interactions" value="2"/>
</dbReference>
<dbReference type="STRING" id="10090.ENSMUSP00000001927"/>
<dbReference type="GlyCosmos" id="Q8CG19">
    <property type="glycosylation" value="15 sites, No reported glycans"/>
</dbReference>
<dbReference type="GlyGen" id="Q8CG19">
    <property type="glycosylation" value="16 sites, 2 N-linked glycans (3 sites)"/>
</dbReference>
<dbReference type="iPTMnet" id="Q8CG19"/>
<dbReference type="PhosphoSitePlus" id="Q8CG19"/>
<dbReference type="PaxDb" id="10090-ENSMUSP00000001927"/>
<dbReference type="PeptideAtlas" id="Q8CG19"/>
<dbReference type="ProteomicsDB" id="292124">
    <molecule id="Q8CG19-1"/>
</dbReference>
<dbReference type="ProteomicsDB" id="292125">
    <molecule id="Q8CG19-2"/>
</dbReference>
<dbReference type="ProteomicsDB" id="292126">
    <molecule id="Q8CG19-3"/>
</dbReference>
<dbReference type="Pumba" id="Q8CG19"/>
<dbReference type="Antibodypedia" id="1284">
    <property type="antibodies" value="210 antibodies from 31 providers"/>
</dbReference>
<dbReference type="DNASU" id="268977"/>
<dbReference type="Ensembl" id="ENSMUST00000001927.12">
    <molecule id="Q8CG19-1"/>
    <property type="protein sequence ID" value="ENSMUSP00000001927.6"/>
    <property type="gene ID" value="ENSMUSG00000001870.17"/>
</dbReference>
<dbReference type="Ensembl" id="ENSMUST00000112514.2">
    <molecule id="Q8CG19-3"/>
    <property type="protein sequence ID" value="ENSMUSP00000108133.2"/>
    <property type="gene ID" value="ENSMUSG00000001870.17"/>
</dbReference>
<dbReference type="Ensembl" id="ENSMUST00000112516.8">
    <molecule id="Q8CG19-2"/>
    <property type="protein sequence ID" value="ENSMUSP00000108135.2"/>
    <property type="gene ID" value="ENSMUSG00000001870.17"/>
</dbReference>
<dbReference type="GeneID" id="268977"/>
<dbReference type="KEGG" id="mmu:268977"/>
<dbReference type="UCSC" id="uc008dom.2">
    <molecule id="Q8CG19-1"/>
    <property type="organism name" value="mouse"/>
</dbReference>
<dbReference type="UCSC" id="uc008doo.2">
    <molecule id="Q8CG19-2"/>
    <property type="organism name" value="mouse"/>
</dbReference>
<dbReference type="AGR" id="MGI:109151"/>
<dbReference type="CTD" id="4052"/>
<dbReference type="MGI" id="MGI:109151">
    <property type="gene designation" value="Ltbp1"/>
</dbReference>
<dbReference type="VEuPathDB" id="HostDB:ENSMUSG00000001870"/>
<dbReference type="eggNOG" id="KOG1217">
    <property type="taxonomic scope" value="Eukaryota"/>
</dbReference>
<dbReference type="GeneTree" id="ENSGT00940000155823"/>
<dbReference type="HOGENOM" id="CLU_001884_1_0_1"/>
<dbReference type="InParanoid" id="Q8CG19"/>
<dbReference type="OrthoDB" id="11987at9989"/>
<dbReference type="PhylomeDB" id="Q8CG19"/>
<dbReference type="TreeFam" id="TF317514"/>
<dbReference type="Reactome" id="R-MMU-2129379">
    <property type="pathway name" value="Molecules associated with elastic fibres"/>
</dbReference>
<dbReference type="Reactome" id="R-MMU-2173789">
    <property type="pathway name" value="TGF-beta receptor signaling activates SMADs"/>
</dbReference>
<dbReference type="Reactome" id="R-MMU-381426">
    <property type="pathway name" value="Regulation of Insulin-like Growth Factor (IGF) transport and uptake by Insulin-like Growth Factor Binding Proteins (IGFBPs)"/>
</dbReference>
<dbReference type="Reactome" id="R-MMU-8957275">
    <property type="pathway name" value="Post-translational protein phosphorylation"/>
</dbReference>
<dbReference type="BioGRID-ORCS" id="268977">
    <property type="hits" value="2 hits in 79 CRISPR screens"/>
</dbReference>
<dbReference type="ChiTaRS" id="Ltbp1">
    <property type="organism name" value="mouse"/>
</dbReference>
<dbReference type="PRO" id="PR:Q8CG19"/>
<dbReference type="Proteomes" id="UP000000589">
    <property type="component" value="Chromosome 17"/>
</dbReference>
<dbReference type="RNAct" id="Q8CG19">
    <property type="molecule type" value="protein"/>
</dbReference>
<dbReference type="Bgee" id="ENSMUSG00000001870">
    <property type="expression patterns" value="Expressed in ascending aorta and 237 other cell types or tissues"/>
</dbReference>
<dbReference type="ExpressionAtlas" id="Q8CG19">
    <property type="expression patterns" value="baseline and differential"/>
</dbReference>
<dbReference type="GO" id="GO:0062023">
    <property type="term" value="C:collagen-containing extracellular matrix"/>
    <property type="evidence" value="ECO:0007005"/>
    <property type="project" value="BHF-UCL"/>
</dbReference>
<dbReference type="GO" id="GO:0031012">
    <property type="term" value="C:extracellular matrix"/>
    <property type="evidence" value="ECO:0000314"/>
    <property type="project" value="MGI"/>
</dbReference>
<dbReference type="GO" id="GO:0005576">
    <property type="term" value="C:extracellular region"/>
    <property type="evidence" value="ECO:0007669"/>
    <property type="project" value="UniProtKB-SubCell"/>
</dbReference>
<dbReference type="GO" id="GO:0001527">
    <property type="term" value="C:microfibril"/>
    <property type="evidence" value="ECO:0000314"/>
    <property type="project" value="UniProtKB"/>
</dbReference>
<dbReference type="GO" id="GO:0005509">
    <property type="term" value="F:calcium ion binding"/>
    <property type="evidence" value="ECO:0007669"/>
    <property type="project" value="InterPro"/>
</dbReference>
<dbReference type="GO" id="GO:0019838">
    <property type="term" value="F:growth factor binding"/>
    <property type="evidence" value="ECO:0007669"/>
    <property type="project" value="UniProtKB-KW"/>
</dbReference>
<dbReference type="GO" id="GO:0141069">
    <property type="term" value="F:receptor ligand inhibitor activity"/>
    <property type="evidence" value="ECO:0000250"/>
    <property type="project" value="UniProtKB"/>
</dbReference>
<dbReference type="GO" id="GO:0035904">
    <property type="term" value="P:aorta development"/>
    <property type="evidence" value="ECO:0000315"/>
    <property type="project" value="MGI"/>
</dbReference>
<dbReference type="GO" id="GO:0060976">
    <property type="term" value="P:coronary vasculature development"/>
    <property type="evidence" value="ECO:0000315"/>
    <property type="project" value="MGI"/>
</dbReference>
<dbReference type="GO" id="GO:0035583">
    <property type="term" value="P:sequestering of TGFbeta in extracellular matrix"/>
    <property type="evidence" value="ECO:0000250"/>
    <property type="project" value="UniProtKB"/>
</dbReference>
<dbReference type="GO" id="GO:0007179">
    <property type="term" value="P:transforming growth factor beta receptor signaling pathway"/>
    <property type="evidence" value="ECO:0000304"/>
    <property type="project" value="MGI"/>
</dbReference>
<dbReference type="GO" id="GO:0003281">
    <property type="term" value="P:ventricular septum development"/>
    <property type="evidence" value="ECO:0000315"/>
    <property type="project" value="MGI"/>
</dbReference>
<dbReference type="CDD" id="cd00054">
    <property type="entry name" value="EGF_CA"/>
    <property type="match status" value="12"/>
</dbReference>
<dbReference type="FunFam" id="2.10.25.10:FF:000198">
    <property type="entry name" value="latent-transforming growth factor beta-binding protein 1 isoform X1"/>
    <property type="match status" value="1"/>
</dbReference>
<dbReference type="FunFam" id="2.10.25.10:FF:000205">
    <property type="entry name" value="latent-transforming growth factor beta-binding protein 1 isoform X1"/>
    <property type="match status" value="1"/>
</dbReference>
<dbReference type="FunFam" id="3.90.290.10:FF:000004">
    <property type="entry name" value="latent-transforming growth factor beta-binding protein 1 isoform X1"/>
    <property type="match status" value="1"/>
</dbReference>
<dbReference type="FunFam" id="2.10.25.10:FF:000046">
    <property type="entry name" value="Latent-transforming growth factor beta-binding protein 1 isoform x2"/>
    <property type="match status" value="1"/>
</dbReference>
<dbReference type="FunFam" id="2.10.25.10:FF:000019">
    <property type="entry name" value="latent-transforming growth factor beta-binding protein 1 isoform X2"/>
    <property type="match status" value="6"/>
</dbReference>
<dbReference type="FunFam" id="3.90.290.10:FF:000012">
    <property type="entry name" value="latent-transforming growth factor beta-binding protein 1 isoform X2"/>
    <property type="match status" value="1"/>
</dbReference>
<dbReference type="FunFam" id="2.10.25.10:FF:000475">
    <property type="entry name" value="latent-transforming growth factor beta-binding protein 1 isoform X3"/>
    <property type="match status" value="1"/>
</dbReference>
<dbReference type="FunFam" id="2.10.25.10:FF:000515">
    <property type="entry name" value="latent-transforming growth factor beta-binding protein 1 isoform X6"/>
    <property type="match status" value="1"/>
</dbReference>
<dbReference type="FunFam" id="2.10.25.10:FF:000014">
    <property type="entry name" value="Latent-transforming growth factor beta-binding protein 3"/>
    <property type="match status" value="1"/>
</dbReference>
<dbReference type="FunFam" id="2.10.25.10:FF:000077">
    <property type="entry name" value="Latent-transforming growth factor beta-binding protein 3 isoform 1"/>
    <property type="match status" value="1"/>
</dbReference>
<dbReference type="FunFam" id="3.90.290.10:FF:000001">
    <property type="entry name" value="Latent-transforming growth factor beta-binding protein 3 isoform 1"/>
    <property type="match status" value="1"/>
</dbReference>
<dbReference type="FunFam" id="3.90.290.10:FF:000002">
    <property type="entry name" value="Latent-transforming growth factor beta-binding protein 3 isoform 1"/>
    <property type="match status" value="1"/>
</dbReference>
<dbReference type="FunFam" id="2.10.25.10:FF:000056">
    <property type="entry name" value="Latent-transforming growth factor beta-binding protein 3 isoform 2"/>
    <property type="match status" value="1"/>
</dbReference>
<dbReference type="FunFam" id="2.10.25.10:FF:000115">
    <property type="entry name" value="latent-transforming growth factor beta-binding protein 4 isoform X2"/>
    <property type="match status" value="1"/>
</dbReference>
<dbReference type="FunFam" id="2.10.25.10:FF:000273">
    <property type="entry name" value="Putative latent-transforming growth factor beta-binding protein 2"/>
    <property type="match status" value="1"/>
</dbReference>
<dbReference type="Gene3D" id="2.10.25.10">
    <property type="entry name" value="Laminin"/>
    <property type="match status" value="18"/>
</dbReference>
<dbReference type="Gene3D" id="3.90.290.10">
    <property type="entry name" value="TGF-beta binding (TB) domain"/>
    <property type="match status" value="4"/>
</dbReference>
<dbReference type="InterPro" id="IPR001881">
    <property type="entry name" value="EGF-like_Ca-bd_dom"/>
</dbReference>
<dbReference type="InterPro" id="IPR000742">
    <property type="entry name" value="EGF-like_dom"/>
</dbReference>
<dbReference type="InterPro" id="IPR000152">
    <property type="entry name" value="EGF-type_Asp/Asn_hydroxyl_site"/>
</dbReference>
<dbReference type="InterPro" id="IPR018097">
    <property type="entry name" value="EGF_Ca-bd_CS"/>
</dbReference>
<dbReference type="InterPro" id="IPR009030">
    <property type="entry name" value="Growth_fac_rcpt_cys_sf"/>
</dbReference>
<dbReference type="InterPro" id="IPR049883">
    <property type="entry name" value="NOTCH1_EGF-like"/>
</dbReference>
<dbReference type="InterPro" id="IPR017878">
    <property type="entry name" value="TB_dom"/>
</dbReference>
<dbReference type="InterPro" id="IPR036773">
    <property type="entry name" value="TB_dom_sf"/>
</dbReference>
<dbReference type="InterPro" id="IPR052080">
    <property type="entry name" value="vWF_C/EGF_Fibrillin"/>
</dbReference>
<dbReference type="PANTHER" id="PTHR47333:SF5">
    <property type="entry name" value="FIBRILLIN-3"/>
    <property type="match status" value="1"/>
</dbReference>
<dbReference type="PANTHER" id="PTHR47333">
    <property type="entry name" value="VON WILLEBRAND FACTOR C AND EGF DOMAIN-CONTAINING PROTEIN"/>
    <property type="match status" value="1"/>
</dbReference>
<dbReference type="Pfam" id="PF07645">
    <property type="entry name" value="EGF_CA"/>
    <property type="match status" value="15"/>
</dbReference>
<dbReference type="Pfam" id="PF00683">
    <property type="entry name" value="TB"/>
    <property type="match status" value="4"/>
</dbReference>
<dbReference type="PIRSF" id="PIRSF036312">
    <property type="entry name" value="Fibrillin"/>
    <property type="match status" value="1"/>
</dbReference>
<dbReference type="SMART" id="SM00181">
    <property type="entry name" value="EGF"/>
    <property type="match status" value="18"/>
</dbReference>
<dbReference type="SMART" id="SM00179">
    <property type="entry name" value="EGF_CA"/>
    <property type="match status" value="16"/>
</dbReference>
<dbReference type="SUPFAM" id="SSF57196">
    <property type="entry name" value="EGF/Laminin"/>
    <property type="match status" value="5"/>
</dbReference>
<dbReference type="SUPFAM" id="SSF57184">
    <property type="entry name" value="Growth factor receptor domain"/>
    <property type="match status" value="5"/>
</dbReference>
<dbReference type="SUPFAM" id="SSF57581">
    <property type="entry name" value="TB module/8-cys domain"/>
    <property type="match status" value="4"/>
</dbReference>
<dbReference type="PROSITE" id="PS00010">
    <property type="entry name" value="ASX_HYDROXYL"/>
    <property type="match status" value="13"/>
</dbReference>
<dbReference type="PROSITE" id="PS00022">
    <property type="entry name" value="EGF_1"/>
    <property type="match status" value="2"/>
</dbReference>
<dbReference type="PROSITE" id="PS01186">
    <property type="entry name" value="EGF_2"/>
    <property type="match status" value="11"/>
</dbReference>
<dbReference type="PROSITE" id="PS50026">
    <property type="entry name" value="EGF_3"/>
    <property type="match status" value="14"/>
</dbReference>
<dbReference type="PROSITE" id="PS01187">
    <property type="entry name" value="EGF_CA"/>
    <property type="match status" value="15"/>
</dbReference>
<dbReference type="PROSITE" id="PS51364">
    <property type="entry name" value="TB"/>
    <property type="match status" value="4"/>
</dbReference>
<gene>
    <name evidence="11" type="primary">Ltbp1</name>
</gene>